<dbReference type="EC" id="3.4.-.-" evidence="1"/>
<dbReference type="EMBL" id="CR936257">
    <property type="protein sequence ID" value="CAI48478.1"/>
    <property type="molecule type" value="Genomic_DNA"/>
</dbReference>
<dbReference type="RefSeq" id="WP_011322114.1">
    <property type="nucleotide sequence ID" value="NC_007426.1"/>
</dbReference>
<dbReference type="SMR" id="Q3ITQ5"/>
<dbReference type="STRING" id="348780.NP_0774A"/>
<dbReference type="EnsemblBacteria" id="CAI48478">
    <property type="protein sequence ID" value="CAI48478"/>
    <property type="gene ID" value="NP_0774A"/>
</dbReference>
<dbReference type="GeneID" id="3700958"/>
<dbReference type="KEGG" id="nph:NP_0774A"/>
<dbReference type="eggNOG" id="arCOG00458">
    <property type="taxonomic scope" value="Archaea"/>
</dbReference>
<dbReference type="HOGENOM" id="CLU_108521_2_0_2"/>
<dbReference type="OrthoDB" id="50281at2157"/>
<dbReference type="Proteomes" id="UP000002698">
    <property type="component" value="Chromosome"/>
</dbReference>
<dbReference type="GO" id="GO:0008237">
    <property type="term" value="F:metallopeptidase activity"/>
    <property type="evidence" value="ECO:0007669"/>
    <property type="project" value="UniProtKB-UniRule"/>
</dbReference>
<dbReference type="GO" id="GO:0008270">
    <property type="term" value="F:zinc ion binding"/>
    <property type="evidence" value="ECO:0007669"/>
    <property type="project" value="UniProtKB-UniRule"/>
</dbReference>
<dbReference type="GO" id="GO:0006508">
    <property type="term" value="P:proteolysis"/>
    <property type="evidence" value="ECO:0007669"/>
    <property type="project" value="UniProtKB-UniRule"/>
</dbReference>
<dbReference type="CDD" id="cd11375">
    <property type="entry name" value="Peptidase_M54"/>
    <property type="match status" value="1"/>
</dbReference>
<dbReference type="Gene3D" id="3.40.390.10">
    <property type="entry name" value="Collagenase (Catalytic Domain)"/>
    <property type="match status" value="1"/>
</dbReference>
<dbReference type="HAMAP" id="MF_01842">
    <property type="entry name" value="Archaemetzincin"/>
    <property type="match status" value="1"/>
</dbReference>
<dbReference type="InterPro" id="IPR024079">
    <property type="entry name" value="MetalloPept_cat_dom_sf"/>
</dbReference>
<dbReference type="InterPro" id="IPR012962">
    <property type="entry name" value="Pept_M54_archaemetzincn"/>
</dbReference>
<dbReference type="InterPro" id="IPR012091">
    <property type="entry name" value="Pept_M54_archaemetzncn_arc/bac"/>
</dbReference>
<dbReference type="NCBIfam" id="NF033823">
    <property type="entry name" value="archmetzin"/>
    <property type="match status" value="1"/>
</dbReference>
<dbReference type="PANTHER" id="PTHR15910">
    <property type="entry name" value="ARCHAEMETZINCIN"/>
    <property type="match status" value="1"/>
</dbReference>
<dbReference type="PANTHER" id="PTHR15910:SF1">
    <property type="entry name" value="ARCHAEMETZINCIN-2"/>
    <property type="match status" value="1"/>
</dbReference>
<dbReference type="Pfam" id="PF07998">
    <property type="entry name" value="Peptidase_M54"/>
    <property type="match status" value="1"/>
</dbReference>
<dbReference type="PIRSF" id="PIRSF005785">
    <property type="entry name" value="Zn-prot_arch"/>
    <property type="match status" value="1"/>
</dbReference>
<dbReference type="SUPFAM" id="SSF55486">
    <property type="entry name" value="Metalloproteases ('zincins'), catalytic domain"/>
    <property type="match status" value="1"/>
</dbReference>
<feature type="chain" id="PRO_0000159629" description="Archaemetzincin">
    <location>
        <begin position="1"/>
        <end position="173"/>
    </location>
</feature>
<feature type="active site" description="Proton acceptor" evidence="1">
    <location>
        <position position="131"/>
    </location>
</feature>
<feature type="binding site" evidence="1">
    <location>
        <position position="130"/>
    </location>
    <ligand>
        <name>Zn(2+)</name>
        <dbReference type="ChEBI" id="CHEBI:29105"/>
        <label>1</label>
        <note>catalytic</note>
    </ligand>
</feature>
<feature type="binding site" evidence="1">
    <location>
        <position position="134"/>
    </location>
    <ligand>
        <name>Zn(2+)</name>
        <dbReference type="ChEBI" id="CHEBI:29105"/>
        <label>1</label>
        <note>catalytic</note>
    </ligand>
</feature>
<feature type="binding site" evidence="1">
    <location>
        <position position="140"/>
    </location>
    <ligand>
        <name>Zn(2+)</name>
        <dbReference type="ChEBI" id="CHEBI:29105"/>
        <label>1</label>
        <note>catalytic</note>
    </ligand>
</feature>
<feature type="binding site" evidence="1">
    <location>
        <position position="141"/>
    </location>
    <ligand>
        <name>Zn(2+)</name>
        <dbReference type="ChEBI" id="CHEBI:29105"/>
        <label>2</label>
    </ligand>
</feature>
<feature type="binding site" evidence="1">
    <location>
        <position position="146"/>
    </location>
    <ligand>
        <name>Zn(2+)</name>
        <dbReference type="ChEBI" id="CHEBI:29105"/>
        <label>2</label>
    </ligand>
</feature>
<feature type="binding site" evidence="1">
    <location>
        <position position="165"/>
    </location>
    <ligand>
        <name>Zn(2+)</name>
        <dbReference type="ChEBI" id="CHEBI:29105"/>
        <label>2</label>
    </ligand>
</feature>
<feature type="binding site" evidence="1">
    <location>
        <position position="168"/>
    </location>
    <ligand>
        <name>Zn(2+)</name>
        <dbReference type="ChEBI" id="CHEBI:29105"/>
        <label>2</label>
    </ligand>
</feature>
<name>AMZA_NATPD</name>
<gene>
    <name evidence="1" type="primary">amzA</name>
    <name type="ordered locus">NP_0774A</name>
</gene>
<proteinExistence type="inferred from homology"/>
<evidence type="ECO:0000255" key="1">
    <source>
        <dbReference type="HAMAP-Rule" id="MF_01842"/>
    </source>
</evidence>
<organism>
    <name type="scientific">Natronomonas pharaonis (strain ATCC 35678 / DSM 2160 / CIP 103997 / JCM 8858 / NBRC 14720 / NCIMB 2260 / Gabara)</name>
    <name type="common">Halobacterium pharaonis</name>
    <dbReference type="NCBI Taxonomy" id="348780"/>
    <lineage>
        <taxon>Archaea</taxon>
        <taxon>Methanobacteriati</taxon>
        <taxon>Methanobacteriota</taxon>
        <taxon>Stenosarchaea group</taxon>
        <taxon>Halobacteria</taxon>
        <taxon>Halobacteriales</taxon>
        <taxon>Haloarculaceae</taxon>
        <taxon>Natronomonas</taxon>
    </lineage>
</organism>
<comment type="function">
    <text evidence="1">Probable zinc metalloprotease whose natural substrate is unknown.</text>
</comment>
<comment type="cofactor">
    <cofactor evidence="1">
        <name>Zn(2+)</name>
        <dbReference type="ChEBI" id="CHEBI:29105"/>
    </cofactor>
    <text evidence="1">Binds 2 Zn(2+) ions per subunit. One is catalytic, whereas the other seems to have a structural role.</text>
</comment>
<comment type="subunit">
    <text evidence="1">Monomer.</text>
</comment>
<comment type="similarity">
    <text evidence="1">Belongs to the peptidase M54 family.</text>
</comment>
<sequence length="173" mass="19183">MHVDIVPVGDLPAVVKREASSGLRSVYDCEVTIHDSQPVPDGAYDSGRDQYRAEEFIELASRVGNGEKNIAITDTDLYYRRRNYVFGLAYLSGKGSVISTHRLQTSSDGGFSEKSAGDIFADRVRKEVVHEVGHTLGLEHCDNSRCVMNFSPTVREVDVKEENLCGSCQRQIL</sequence>
<protein>
    <recommendedName>
        <fullName evidence="1">Archaemetzincin</fullName>
        <ecNumber evidence="1">3.4.-.-</ecNumber>
    </recommendedName>
</protein>
<reference key="1">
    <citation type="journal article" date="2005" name="Genome Res.">
        <title>Living with two extremes: conclusions from the genome sequence of Natronomonas pharaonis.</title>
        <authorList>
            <person name="Falb M."/>
            <person name="Pfeiffer F."/>
            <person name="Palm P."/>
            <person name="Rodewald K."/>
            <person name="Hickmann V."/>
            <person name="Tittor J."/>
            <person name="Oesterhelt D."/>
        </authorList>
    </citation>
    <scope>NUCLEOTIDE SEQUENCE [LARGE SCALE GENOMIC DNA]</scope>
    <source>
        <strain>ATCC 35678 / DSM 2160 / CIP 103997 / JCM 8858 / NBRC 14720 / NCIMB 2260 / Gabara</strain>
    </source>
</reference>
<keyword id="KW-0378">Hydrolase</keyword>
<keyword id="KW-0479">Metal-binding</keyword>
<keyword id="KW-0482">Metalloprotease</keyword>
<keyword id="KW-0645">Protease</keyword>
<keyword id="KW-1185">Reference proteome</keyword>
<keyword id="KW-0862">Zinc</keyword>
<accession>Q3ITQ5</accession>